<reference key="1">
    <citation type="submission" date="2008-06" db="EMBL/GenBank/DDBJ databases">
        <title>Complete sequence of Stenotrophomonas maltophilia R551-3.</title>
        <authorList>
            <consortium name="US DOE Joint Genome Institute"/>
            <person name="Lucas S."/>
            <person name="Copeland A."/>
            <person name="Lapidus A."/>
            <person name="Glavina del Rio T."/>
            <person name="Dalin E."/>
            <person name="Tice H."/>
            <person name="Pitluck S."/>
            <person name="Chain P."/>
            <person name="Malfatti S."/>
            <person name="Shin M."/>
            <person name="Vergez L."/>
            <person name="Lang D."/>
            <person name="Schmutz J."/>
            <person name="Larimer F."/>
            <person name="Land M."/>
            <person name="Hauser L."/>
            <person name="Kyrpides N."/>
            <person name="Mikhailova N."/>
            <person name="Taghavi S."/>
            <person name="Monchy S."/>
            <person name="Newman L."/>
            <person name="Vangronsveld J."/>
            <person name="van der Lelie D."/>
            <person name="Richardson P."/>
        </authorList>
    </citation>
    <scope>NUCLEOTIDE SEQUENCE [LARGE SCALE GENOMIC DNA]</scope>
    <source>
        <strain>R551-3</strain>
    </source>
</reference>
<comment type="subunit">
    <text evidence="1">Part of the 50S ribosomal subunit. Contacts protein L32.</text>
</comment>
<comment type="similarity">
    <text evidence="1">Belongs to the bacterial ribosomal protein bL17 family.</text>
</comment>
<keyword id="KW-0687">Ribonucleoprotein</keyword>
<keyword id="KW-0689">Ribosomal protein</keyword>
<evidence type="ECO:0000255" key="1">
    <source>
        <dbReference type="HAMAP-Rule" id="MF_01368"/>
    </source>
</evidence>
<evidence type="ECO:0000305" key="2"/>
<gene>
    <name evidence="1" type="primary">rplQ</name>
    <name type="ordered locus">Smal_0781</name>
</gene>
<proteinExistence type="inferred from homology"/>
<feature type="chain" id="PRO_1000144488" description="Large ribosomal subunit protein bL17">
    <location>
        <begin position="1"/>
        <end position="127"/>
    </location>
</feature>
<name>RL17_STRM5</name>
<accession>B4SLH6</accession>
<protein>
    <recommendedName>
        <fullName evidence="1">Large ribosomal subunit protein bL17</fullName>
    </recommendedName>
    <alternativeName>
        <fullName evidence="2">50S ribosomal protein L17</fullName>
    </alternativeName>
</protein>
<dbReference type="EMBL" id="CP001111">
    <property type="protein sequence ID" value="ACF50486.1"/>
    <property type="molecule type" value="Genomic_DNA"/>
</dbReference>
<dbReference type="RefSeq" id="WP_004145464.1">
    <property type="nucleotide sequence ID" value="NC_011071.1"/>
</dbReference>
<dbReference type="SMR" id="B4SLH6"/>
<dbReference type="STRING" id="391008.Smal_0781"/>
<dbReference type="KEGG" id="smt:Smal_0781"/>
<dbReference type="eggNOG" id="COG0203">
    <property type="taxonomic scope" value="Bacteria"/>
</dbReference>
<dbReference type="HOGENOM" id="CLU_074407_2_0_6"/>
<dbReference type="OrthoDB" id="9809073at2"/>
<dbReference type="Proteomes" id="UP000001867">
    <property type="component" value="Chromosome"/>
</dbReference>
<dbReference type="GO" id="GO:0022625">
    <property type="term" value="C:cytosolic large ribosomal subunit"/>
    <property type="evidence" value="ECO:0007669"/>
    <property type="project" value="TreeGrafter"/>
</dbReference>
<dbReference type="GO" id="GO:0003735">
    <property type="term" value="F:structural constituent of ribosome"/>
    <property type="evidence" value="ECO:0007669"/>
    <property type="project" value="InterPro"/>
</dbReference>
<dbReference type="GO" id="GO:0006412">
    <property type="term" value="P:translation"/>
    <property type="evidence" value="ECO:0007669"/>
    <property type="project" value="UniProtKB-UniRule"/>
</dbReference>
<dbReference type="FunFam" id="3.90.1030.10:FF:000001">
    <property type="entry name" value="50S ribosomal protein L17"/>
    <property type="match status" value="1"/>
</dbReference>
<dbReference type="Gene3D" id="3.90.1030.10">
    <property type="entry name" value="Ribosomal protein L17"/>
    <property type="match status" value="1"/>
</dbReference>
<dbReference type="HAMAP" id="MF_01368">
    <property type="entry name" value="Ribosomal_bL17"/>
    <property type="match status" value="1"/>
</dbReference>
<dbReference type="InterPro" id="IPR000456">
    <property type="entry name" value="Ribosomal_bL17"/>
</dbReference>
<dbReference type="InterPro" id="IPR047859">
    <property type="entry name" value="Ribosomal_bL17_CS"/>
</dbReference>
<dbReference type="InterPro" id="IPR036373">
    <property type="entry name" value="Ribosomal_bL17_sf"/>
</dbReference>
<dbReference type="NCBIfam" id="TIGR00059">
    <property type="entry name" value="L17"/>
    <property type="match status" value="1"/>
</dbReference>
<dbReference type="PANTHER" id="PTHR14413:SF16">
    <property type="entry name" value="LARGE RIBOSOMAL SUBUNIT PROTEIN BL17M"/>
    <property type="match status" value="1"/>
</dbReference>
<dbReference type="PANTHER" id="PTHR14413">
    <property type="entry name" value="RIBOSOMAL PROTEIN L17"/>
    <property type="match status" value="1"/>
</dbReference>
<dbReference type="Pfam" id="PF01196">
    <property type="entry name" value="Ribosomal_L17"/>
    <property type="match status" value="1"/>
</dbReference>
<dbReference type="SUPFAM" id="SSF64263">
    <property type="entry name" value="Prokaryotic ribosomal protein L17"/>
    <property type="match status" value="1"/>
</dbReference>
<dbReference type="PROSITE" id="PS01167">
    <property type="entry name" value="RIBOSOMAL_L17"/>
    <property type="match status" value="1"/>
</dbReference>
<sequence>MRHQKSGRKFSRTSAHREAMFKNMAASLFKHELIKTTLPKAKELRRVAEPLITLAKVDSVANRRLAFARLRDNEAVGNLFTILGPRYANRPGGYLRLLKCGFRAGDNAPMAYVELVDRPVVAEAVAE</sequence>
<organism>
    <name type="scientific">Stenotrophomonas maltophilia (strain R551-3)</name>
    <dbReference type="NCBI Taxonomy" id="391008"/>
    <lineage>
        <taxon>Bacteria</taxon>
        <taxon>Pseudomonadati</taxon>
        <taxon>Pseudomonadota</taxon>
        <taxon>Gammaproteobacteria</taxon>
        <taxon>Lysobacterales</taxon>
        <taxon>Lysobacteraceae</taxon>
        <taxon>Stenotrophomonas</taxon>
        <taxon>Stenotrophomonas maltophilia group</taxon>
    </lineage>
</organism>